<keyword id="KW-0131">Cell cycle</keyword>
<keyword id="KW-0132">Cell division</keyword>
<keyword id="KW-0143">Chaperone</keyword>
<keyword id="KW-0963">Cytoplasm</keyword>
<keyword id="KW-0413">Isomerase</keyword>
<keyword id="KW-1185">Reference proteome</keyword>
<keyword id="KW-0697">Rotamase</keyword>
<gene>
    <name type="primary">tig</name>
    <name type="ordered locus">LL0551</name>
    <name type="ORF">L0336</name>
</gene>
<proteinExistence type="inferred from homology"/>
<reference key="1">
    <citation type="journal article" date="2001" name="Genome Res.">
        <title>The complete genome sequence of the lactic acid bacterium Lactococcus lactis ssp. lactis IL1403.</title>
        <authorList>
            <person name="Bolotin A."/>
            <person name="Wincker P."/>
            <person name="Mauger S."/>
            <person name="Jaillon O."/>
            <person name="Malarme K."/>
            <person name="Weissenbach J."/>
            <person name="Ehrlich S.D."/>
            <person name="Sorokin A."/>
        </authorList>
    </citation>
    <scope>NUCLEOTIDE SEQUENCE [LARGE SCALE GENOMIC DNA]</scope>
    <source>
        <strain>IL1403</strain>
    </source>
</reference>
<organism>
    <name type="scientific">Lactococcus lactis subsp. lactis (strain IL1403)</name>
    <name type="common">Streptococcus lactis</name>
    <dbReference type="NCBI Taxonomy" id="272623"/>
    <lineage>
        <taxon>Bacteria</taxon>
        <taxon>Bacillati</taxon>
        <taxon>Bacillota</taxon>
        <taxon>Bacilli</taxon>
        <taxon>Lactobacillales</taxon>
        <taxon>Streptococcaceae</taxon>
        <taxon>Lactococcus</taxon>
    </lineage>
</organism>
<protein>
    <recommendedName>
        <fullName>Trigger factor</fullName>
        <shortName>TF</shortName>
        <ecNumber>5.2.1.8</ecNumber>
    </recommendedName>
    <alternativeName>
        <fullName>PPIase</fullName>
    </alternativeName>
</protein>
<comment type="function">
    <text evidence="1">Involved in protein export. Acts as a chaperone by maintaining the newly synthesized protein in an open conformation. Functions as a peptidyl-prolyl cis-trans isomerase (By similarity).</text>
</comment>
<comment type="catalytic activity">
    <reaction>
        <text>[protein]-peptidylproline (omega=180) = [protein]-peptidylproline (omega=0)</text>
        <dbReference type="Rhea" id="RHEA:16237"/>
        <dbReference type="Rhea" id="RHEA-COMP:10747"/>
        <dbReference type="Rhea" id="RHEA-COMP:10748"/>
        <dbReference type="ChEBI" id="CHEBI:83833"/>
        <dbReference type="ChEBI" id="CHEBI:83834"/>
        <dbReference type="EC" id="5.2.1.8"/>
    </reaction>
</comment>
<comment type="subcellular location">
    <subcellularLocation>
        <location>Cytoplasm</location>
    </subcellularLocation>
    <text evidence="1">About half TF is bound to the ribosome near the polypeptide exit tunnel while the other half is free in the cytoplasm.</text>
</comment>
<comment type="domain">
    <text evidence="1">Consists of 3 domains; the N-terminus binds the ribosome, the middle domain has PPIase activity, while the C-terminus has intrinsic chaperone activity on its own.</text>
</comment>
<comment type="similarity">
    <text evidence="2">Belongs to the FKBP-type PPIase family. Tig subfamily.</text>
</comment>
<accession>Q9CI15</accession>
<evidence type="ECO:0000250" key="1"/>
<evidence type="ECO:0000305" key="2"/>
<dbReference type="EC" id="5.2.1.8"/>
<dbReference type="EMBL" id="AE005176">
    <property type="protein sequence ID" value="AAK04649.1"/>
    <property type="molecule type" value="Genomic_DNA"/>
</dbReference>
<dbReference type="PIR" id="G86693">
    <property type="entry name" value="G86693"/>
</dbReference>
<dbReference type="RefSeq" id="NP_266707.1">
    <property type="nucleotide sequence ID" value="NC_002662.1"/>
</dbReference>
<dbReference type="RefSeq" id="WP_003131738.1">
    <property type="nucleotide sequence ID" value="NC_002662.1"/>
</dbReference>
<dbReference type="SMR" id="Q9CI15"/>
<dbReference type="PaxDb" id="272623-L0336"/>
<dbReference type="EnsemblBacteria" id="AAK04649">
    <property type="protein sequence ID" value="AAK04649"/>
    <property type="gene ID" value="L0336"/>
</dbReference>
<dbReference type="KEGG" id="lla:L0336"/>
<dbReference type="PATRIC" id="fig|272623.7.peg.589"/>
<dbReference type="eggNOG" id="COG0544">
    <property type="taxonomic scope" value="Bacteria"/>
</dbReference>
<dbReference type="HOGENOM" id="CLU_033058_3_2_9"/>
<dbReference type="OrthoDB" id="9767721at2"/>
<dbReference type="Proteomes" id="UP000002196">
    <property type="component" value="Chromosome"/>
</dbReference>
<dbReference type="GO" id="GO:0005737">
    <property type="term" value="C:cytoplasm"/>
    <property type="evidence" value="ECO:0007669"/>
    <property type="project" value="UniProtKB-SubCell"/>
</dbReference>
<dbReference type="GO" id="GO:0003755">
    <property type="term" value="F:peptidyl-prolyl cis-trans isomerase activity"/>
    <property type="evidence" value="ECO:0007669"/>
    <property type="project" value="UniProtKB-UniRule"/>
</dbReference>
<dbReference type="GO" id="GO:0044183">
    <property type="term" value="F:protein folding chaperone"/>
    <property type="evidence" value="ECO:0007669"/>
    <property type="project" value="TreeGrafter"/>
</dbReference>
<dbReference type="GO" id="GO:0043022">
    <property type="term" value="F:ribosome binding"/>
    <property type="evidence" value="ECO:0007669"/>
    <property type="project" value="TreeGrafter"/>
</dbReference>
<dbReference type="GO" id="GO:0051083">
    <property type="term" value="P:'de novo' cotranslational protein folding"/>
    <property type="evidence" value="ECO:0007669"/>
    <property type="project" value="TreeGrafter"/>
</dbReference>
<dbReference type="GO" id="GO:0051301">
    <property type="term" value="P:cell division"/>
    <property type="evidence" value="ECO:0007669"/>
    <property type="project" value="UniProtKB-KW"/>
</dbReference>
<dbReference type="GO" id="GO:0061077">
    <property type="term" value="P:chaperone-mediated protein folding"/>
    <property type="evidence" value="ECO:0007669"/>
    <property type="project" value="TreeGrafter"/>
</dbReference>
<dbReference type="GO" id="GO:0015031">
    <property type="term" value="P:protein transport"/>
    <property type="evidence" value="ECO:0007669"/>
    <property type="project" value="UniProtKB-UniRule"/>
</dbReference>
<dbReference type="GO" id="GO:0043335">
    <property type="term" value="P:protein unfolding"/>
    <property type="evidence" value="ECO:0007669"/>
    <property type="project" value="TreeGrafter"/>
</dbReference>
<dbReference type="FunFam" id="3.10.50.40:FF:000001">
    <property type="entry name" value="Trigger factor"/>
    <property type="match status" value="1"/>
</dbReference>
<dbReference type="Gene3D" id="3.10.50.40">
    <property type="match status" value="1"/>
</dbReference>
<dbReference type="Gene3D" id="3.30.70.1050">
    <property type="entry name" value="Trigger factor ribosome-binding domain"/>
    <property type="match status" value="1"/>
</dbReference>
<dbReference type="Gene3D" id="1.10.3120.10">
    <property type="entry name" value="Trigger factor, C-terminal domain"/>
    <property type="match status" value="1"/>
</dbReference>
<dbReference type="HAMAP" id="MF_00303">
    <property type="entry name" value="Trigger_factor_Tig"/>
    <property type="match status" value="1"/>
</dbReference>
<dbReference type="InterPro" id="IPR046357">
    <property type="entry name" value="PPIase_dom_sf"/>
</dbReference>
<dbReference type="InterPro" id="IPR001179">
    <property type="entry name" value="PPIase_FKBP_dom"/>
</dbReference>
<dbReference type="InterPro" id="IPR005215">
    <property type="entry name" value="Trig_fac"/>
</dbReference>
<dbReference type="InterPro" id="IPR008880">
    <property type="entry name" value="Trigger_fac_C"/>
</dbReference>
<dbReference type="InterPro" id="IPR037041">
    <property type="entry name" value="Trigger_fac_C_sf"/>
</dbReference>
<dbReference type="InterPro" id="IPR008881">
    <property type="entry name" value="Trigger_fac_ribosome-bd_bac"/>
</dbReference>
<dbReference type="InterPro" id="IPR036611">
    <property type="entry name" value="Trigger_fac_ribosome-bd_sf"/>
</dbReference>
<dbReference type="InterPro" id="IPR027304">
    <property type="entry name" value="Trigger_fact/SurA_dom_sf"/>
</dbReference>
<dbReference type="NCBIfam" id="TIGR00115">
    <property type="entry name" value="tig"/>
    <property type="match status" value="1"/>
</dbReference>
<dbReference type="PANTHER" id="PTHR30560">
    <property type="entry name" value="TRIGGER FACTOR CHAPERONE AND PEPTIDYL-PROLYL CIS/TRANS ISOMERASE"/>
    <property type="match status" value="1"/>
</dbReference>
<dbReference type="PANTHER" id="PTHR30560:SF3">
    <property type="entry name" value="TRIGGER FACTOR-LIKE PROTEIN TIG, CHLOROPLASTIC"/>
    <property type="match status" value="1"/>
</dbReference>
<dbReference type="Pfam" id="PF00254">
    <property type="entry name" value="FKBP_C"/>
    <property type="match status" value="1"/>
</dbReference>
<dbReference type="Pfam" id="PF05698">
    <property type="entry name" value="Trigger_C"/>
    <property type="match status" value="1"/>
</dbReference>
<dbReference type="Pfam" id="PF05697">
    <property type="entry name" value="Trigger_N"/>
    <property type="match status" value="1"/>
</dbReference>
<dbReference type="PIRSF" id="PIRSF003095">
    <property type="entry name" value="Trigger_factor"/>
    <property type="match status" value="1"/>
</dbReference>
<dbReference type="SUPFAM" id="SSF54534">
    <property type="entry name" value="FKBP-like"/>
    <property type="match status" value="1"/>
</dbReference>
<dbReference type="SUPFAM" id="SSF109998">
    <property type="entry name" value="Triger factor/SurA peptide-binding domain-like"/>
    <property type="match status" value="1"/>
</dbReference>
<dbReference type="SUPFAM" id="SSF102735">
    <property type="entry name" value="Trigger factor ribosome-binding domain"/>
    <property type="match status" value="1"/>
</dbReference>
<dbReference type="PROSITE" id="PS50059">
    <property type="entry name" value="FKBP_PPIASE"/>
    <property type="match status" value="1"/>
</dbReference>
<feature type="chain" id="PRO_0000179367" description="Trigger factor">
    <location>
        <begin position="1"/>
        <end position="427"/>
    </location>
</feature>
<feature type="domain" description="PPIase FKBP-type">
    <location>
        <begin position="163"/>
        <end position="248"/>
    </location>
</feature>
<sequence>MTVSFEKTSDTKGTLSFSIDQETIKTGLDKAFNKVKANISVPGFRKGKISRQMFNKMYGEEALFEEALNAVLPTAYDAAVKEAGIEPVAQPKIDVAKMEKGSDWELTAEVVVKPTVSLGDYKDLTVEVEATKEVSDEEVETRLTNSQNNLAELVVKETAAENGDTVVIDFVGSVDGVEFEGGKGSNHSLELGSGQFIPGFEEQLVGTKAGETVEVKVTFPENYQAEDLAGKEALFVTTVNEVKAKELPELDDELAKDIDEEVETLDELKAKFRKELEESKAEAYNDAVETAAIEAAVANAEIKEIPEEMIHEEVHRAMNEFLGGMQQQGISPEMYFQITGTSEDDLHKQYEADADKRVRTNLVIEAIAAAENFTTSDEEVKAEIEDLAGQYNMPVEQVEKLLPVDMLKHDIAMKKAVEVIATTAKVK</sequence>
<name>TIG_LACLA</name>